<proteinExistence type="inferred from homology"/>
<accession>A6ZLD4</accession>
<protein>
    <recommendedName>
        <fullName>Altered inheritance of mitochondria protein 4</fullName>
    </recommendedName>
    <alternativeName>
        <fullName>Synthetic with old yellow enzyme protein 1</fullName>
    </alternativeName>
</protein>
<keyword id="KW-0963">Cytoplasm</keyword>
<dbReference type="EMBL" id="AAFW02000011">
    <property type="protein sequence ID" value="EDN64803.1"/>
    <property type="molecule type" value="Genomic_DNA"/>
</dbReference>
<dbReference type="HOGENOM" id="CLU_2016514_0_0_1"/>
<dbReference type="OrthoDB" id="13632at4893"/>
<dbReference type="Proteomes" id="UP000007060">
    <property type="component" value="Unassembled WGS sequence"/>
</dbReference>
<dbReference type="GO" id="GO:0005737">
    <property type="term" value="C:cytoplasm"/>
    <property type="evidence" value="ECO:0007669"/>
    <property type="project" value="UniProtKB-SubCell"/>
</dbReference>
<dbReference type="Pfam" id="PF12622">
    <property type="entry name" value="NpwBP"/>
    <property type="match status" value="1"/>
</dbReference>
<organism>
    <name type="scientific">Saccharomyces cerevisiae (strain YJM789)</name>
    <name type="common">Baker's yeast</name>
    <dbReference type="NCBI Taxonomy" id="307796"/>
    <lineage>
        <taxon>Eukaryota</taxon>
        <taxon>Fungi</taxon>
        <taxon>Dikarya</taxon>
        <taxon>Ascomycota</taxon>
        <taxon>Saccharomycotina</taxon>
        <taxon>Saccharomycetes</taxon>
        <taxon>Saccharomycetales</taxon>
        <taxon>Saccharomycetaceae</taxon>
        <taxon>Saccharomyces</taxon>
    </lineage>
</organism>
<feature type="chain" id="PRO_0000399859" description="Altered inheritance of mitochondria protein 4">
    <location>
        <begin position="1"/>
        <end position="123"/>
    </location>
</feature>
<feature type="region of interest" description="Disordered" evidence="2">
    <location>
        <begin position="1"/>
        <end position="30"/>
    </location>
</feature>
<feature type="compositionally biased region" description="Basic and acidic residues" evidence="2">
    <location>
        <begin position="1"/>
        <end position="16"/>
    </location>
</feature>
<feature type="compositionally biased region" description="Basic residues" evidence="2">
    <location>
        <begin position="17"/>
        <end position="28"/>
    </location>
</feature>
<reference key="1">
    <citation type="journal article" date="2007" name="Proc. Natl. Acad. Sci. U.S.A.">
        <title>Genome sequencing and comparative analysis of Saccharomyces cerevisiae strain YJM789.</title>
        <authorList>
            <person name="Wei W."/>
            <person name="McCusker J.H."/>
            <person name="Hyman R.W."/>
            <person name="Jones T."/>
            <person name="Ning Y."/>
            <person name="Cao Z."/>
            <person name="Gu Z."/>
            <person name="Bruno D."/>
            <person name="Miranda M."/>
            <person name="Nguyen M."/>
            <person name="Wilhelmy J."/>
            <person name="Komp C."/>
            <person name="Tamse R."/>
            <person name="Wang X."/>
            <person name="Jia P."/>
            <person name="Luedi P."/>
            <person name="Oefner P.J."/>
            <person name="David L."/>
            <person name="Dietrich F.S."/>
            <person name="Li Y."/>
            <person name="Davis R.W."/>
            <person name="Steinmetz L.M."/>
        </authorList>
    </citation>
    <scope>NUCLEOTIDE SEQUENCE [LARGE SCALE GENOMIC DNA]</scope>
    <source>
        <strain>YJM789</strain>
    </source>
</reference>
<name>AIM4_YEAS7</name>
<sequence length="123" mass="14233">MDQKKDPSNNLTERRVSKVQRPNKKKVRNQVESLSRNLERNKEGQLLQTVSKGHLKADSGHSLGREKENGELGIRSIFYDKDWNPRGTAPSHYRNIPYNPATFKRRTEVQARLGNLENIKIPK</sequence>
<evidence type="ECO:0000250" key="1"/>
<evidence type="ECO:0000256" key="2">
    <source>
        <dbReference type="SAM" id="MobiDB-lite"/>
    </source>
</evidence>
<evidence type="ECO:0000305" key="3"/>
<comment type="subunit">
    <text evidence="1">May interact with the nuclear pore complex.</text>
</comment>
<comment type="subcellular location">
    <subcellularLocation>
        <location evidence="1">Cytoplasm</location>
    </subcellularLocation>
</comment>
<comment type="similarity">
    <text evidence="3">Belongs to the AIM4 family.</text>
</comment>
<gene>
    <name type="primary">AIM4</name>
    <name type="synonym">SOY1</name>
    <name type="ORF">SCY_0404</name>
</gene>